<name>PLY1_AMBAR</name>
<feature type="signal peptide" evidence="2">
    <location>
        <begin position="1"/>
        <end position="25"/>
    </location>
</feature>
<feature type="chain" id="PRO_0000024902" description="Pectate lyase 1">
    <location>
        <begin position="26"/>
        <end position="398"/>
    </location>
</feature>
<feature type="active site" evidence="2">
    <location>
        <position position="275"/>
    </location>
</feature>
<feature type="binding site" evidence="1">
    <location>
        <position position="195"/>
    </location>
    <ligand>
        <name>Ca(2+)</name>
        <dbReference type="ChEBI" id="CHEBI:29108"/>
    </ligand>
</feature>
<feature type="binding site" evidence="1">
    <location>
        <position position="219"/>
    </location>
    <ligand>
        <name>Ca(2+)</name>
        <dbReference type="ChEBI" id="CHEBI:29108"/>
    </ligand>
</feature>
<feature type="binding site" evidence="1">
    <location>
        <position position="223"/>
    </location>
    <ligand>
        <name>Ca(2+)</name>
        <dbReference type="ChEBI" id="CHEBI:29108"/>
    </ligand>
</feature>
<feature type="glycosylation site" description="N-linked (GlcNAc...) asparagine" evidence="2">
    <location>
        <position position="37"/>
    </location>
</feature>
<feature type="disulfide bond" evidence="1">
    <location>
        <begin position="55"/>
        <end position="72"/>
    </location>
</feature>
<feature type="sequence variant">
    <original>R</original>
    <variation>K</variation>
    <location>
        <position position="345"/>
    </location>
</feature>
<feature type="sequence variant">
    <original>L</original>
    <variation>I</variation>
    <location>
        <position position="381"/>
    </location>
</feature>
<comment type="function">
    <text evidence="1">Has pectate lyase activity.</text>
</comment>
<comment type="catalytic activity">
    <reaction>
        <text>Eliminative cleavage of (1-&gt;4)-alpha-D-galacturonan to give oligosaccharides with 4-deoxy-alpha-D-galact-4-enuronosyl groups at their non-reducing ends.</text>
        <dbReference type="EC" id="4.2.2.2"/>
    </reaction>
</comment>
<comment type="cofactor">
    <cofactor evidence="1">
        <name>Ca(2+)</name>
        <dbReference type="ChEBI" id="CHEBI:29108"/>
    </cofactor>
    <text evidence="1">Binds 1 Ca(2+) ion.</text>
</comment>
<comment type="pathway">
    <text>Glycan metabolism; pectin degradation; 2-dehydro-3-deoxy-D-gluconate from pectin: step 2/5.</text>
</comment>
<comment type="subunit">
    <text>Monomer.</text>
</comment>
<comment type="tissue specificity">
    <text>Pollen and flowers.</text>
</comment>
<comment type="PTM">
    <text>The N-terminus is blocked.</text>
</comment>
<comment type="allergen">
    <text evidence="3">Causes an allergic reaction in human. This is one of the major allergens of the ragweed pollen.</text>
</comment>
<comment type="similarity">
    <text evidence="4">Belongs to the polysaccharide lyase 1 family. Amb a subfamily.</text>
</comment>
<reference key="1">
    <citation type="journal article" date="1991" name="J. Biol. Chem.">
        <title>Cloning of Amb a I (antigen E), the major allergen family of short ragweed pollen.</title>
        <authorList>
            <person name="Rafnar T."/>
            <person name="Griffith I.J."/>
            <person name="Kuo M.-C."/>
            <person name="Bond J.F."/>
            <person name="Rogers B.L."/>
            <person name="Klapper D.G."/>
        </authorList>
    </citation>
    <scope>NUCLEOTIDE SEQUENCE [MRNA]</scope>
    <scope>ALLERGEN</scope>
    <source>
        <tissue>Pollen</tissue>
    </source>
</reference>
<reference key="2">
    <citation type="journal article" date="1991" name="Int. Arch. Allergy Appl. Immunol.">
        <title>Sequence polymorphism of Amb a I and Amb a II, the major allergens in Ambrosia artemisiifolia (short ragweed).</title>
        <authorList>
            <person name="Griffith I.J."/>
            <person name="Pollock J."/>
            <person name="Klapper D.G."/>
            <person name="Rogers B.L."/>
            <person name="Nault A.K."/>
        </authorList>
    </citation>
    <scope>NUCLEOTIDE SEQUENCE [MRNA]</scope>
    <scope>VARIANTS</scope>
    <source>
        <tissue>Pollen</tissue>
    </source>
</reference>
<reference key="3">
    <citation type="journal article" date="1995" name="Mol. Immunol.">
        <title>Isolation and characterization of a new basic antigen from short ragweed pollen (Ambrosia artemisiifolia).</title>
        <authorList>
            <person name="Pilyavskaya A."/>
            <person name="Wieczorek M."/>
            <person name="Jones S.W."/>
            <person name="Gross K."/>
        </authorList>
    </citation>
    <scope>PROTEIN SEQUENCE OF 44-69</scope>
</reference>
<accession>P27760</accession>
<accession>Q9S8F7</accession>
<organism>
    <name type="scientific">Ambrosia artemisiifolia</name>
    <name type="common">Common ragweed</name>
    <dbReference type="NCBI Taxonomy" id="4212"/>
    <lineage>
        <taxon>Eukaryota</taxon>
        <taxon>Viridiplantae</taxon>
        <taxon>Streptophyta</taxon>
        <taxon>Embryophyta</taxon>
        <taxon>Tracheophyta</taxon>
        <taxon>Spermatophyta</taxon>
        <taxon>Magnoliopsida</taxon>
        <taxon>eudicotyledons</taxon>
        <taxon>Gunneridae</taxon>
        <taxon>Pentapetalae</taxon>
        <taxon>asterids</taxon>
        <taxon>campanulids</taxon>
        <taxon>Asterales</taxon>
        <taxon>Asteraceae</taxon>
        <taxon>Asteroideae</taxon>
        <taxon>Heliantheae alliance</taxon>
        <taxon>Heliantheae</taxon>
        <taxon>Ambrosia</taxon>
    </lineage>
</organism>
<sequence>MGIKHCCYILYFTLALVTLLQPVRSAEDVEEFLPSANETRRSLKACEAHNIIDKCWRCKADWANNRQALADCAQGFAKGTYGGKHGDVYTVTSDKDDDVANPKEGTLRFAAAQNRPLWIIFKRNMVIHLNQELVVNSDKTIDGRGVKVNIVNAGLTLMNVKNIIIHNINIHDIKVCPGGMIKSNDGPPILRQQSDGDAINVAGSSQIWIDHCSLSKASDGLLDITLGSSHVTVSNCKFTQHQFVLLLGADDTHYQDKGMLATVAFNMFTDHVDQRMPRCRFGFFQVVNNNYDRWGTYAIGGSSAPTILSQGNRFFAPDDIIKKNVLARTGTGNAESMSWNWRTDRDLLENGAIFLPSGSDPVLTPEQKAGMIPAEPGEAVLRLTSSAGVLSCHQGAPC</sequence>
<proteinExistence type="evidence at protein level"/>
<evidence type="ECO:0000250" key="1"/>
<evidence type="ECO:0000255" key="2"/>
<evidence type="ECO:0000269" key="3">
    <source>
    </source>
</evidence>
<evidence type="ECO:0000305" key="4"/>
<keyword id="KW-0020">Allergen</keyword>
<keyword id="KW-0106">Calcium</keyword>
<keyword id="KW-0903">Direct protein sequencing</keyword>
<keyword id="KW-1015">Disulfide bond</keyword>
<keyword id="KW-0325">Glycoprotein</keyword>
<keyword id="KW-0456">Lyase</keyword>
<keyword id="KW-0479">Metal-binding</keyword>
<keyword id="KW-0732">Signal</keyword>
<dbReference type="EC" id="4.2.2.2"/>
<dbReference type="EMBL" id="M62981">
    <property type="protein sequence ID" value="AAA32666.1"/>
    <property type="molecule type" value="mRNA"/>
</dbReference>
<dbReference type="EMBL" id="M80559">
    <property type="protein sequence ID" value="AAA32667.1"/>
    <property type="molecule type" value="mRNA"/>
</dbReference>
<dbReference type="PIR" id="B39099">
    <property type="entry name" value="B39099"/>
</dbReference>
<dbReference type="PIR" id="B53240">
    <property type="entry name" value="B53240"/>
</dbReference>
<dbReference type="SMR" id="P27760"/>
<dbReference type="Allergome" id="24">
    <property type="allergen name" value="Amb a 1"/>
</dbReference>
<dbReference type="Allergome" id="788">
    <property type="allergen name" value="Amb a 1.0201"/>
</dbReference>
<dbReference type="CAZy" id="PL1">
    <property type="family name" value="Polysaccharide Lyase Family 1"/>
</dbReference>
<dbReference type="UniPathway" id="UPA00545">
    <property type="reaction ID" value="UER00824"/>
</dbReference>
<dbReference type="GO" id="GO:0046872">
    <property type="term" value="F:metal ion binding"/>
    <property type="evidence" value="ECO:0007669"/>
    <property type="project" value="UniProtKB-KW"/>
</dbReference>
<dbReference type="GO" id="GO:0030570">
    <property type="term" value="F:pectate lyase activity"/>
    <property type="evidence" value="ECO:0007669"/>
    <property type="project" value="UniProtKB-EC"/>
</dbReference>
<dbReference type="GO" id="GO:0045490">
    <property type="term" value="P:pectin catabolic process"/>
    <property type="evidence" value="ECO:0007669"/>
    <property type="project" value="UniProtKB-UniPathway"/>
</dbReference>
<dbReference type="Gene3D" id="2.160.20.10">
    <property type="entry name" value="Single-stranded right-handed beta-helix, Pectin lyase-like"/>
    <property type="match status" value="1"/>
</dbReference>
<dbReference type="InterPro" id="IPR018082">
    <property type="entry name" value="AmbAllergen"/>
</dbReference>
<dbReference type="InterPro" id="IPR002022">
    <property type="entry name" value="Pec_lyase"/>
</dbReference>
<dbReference type="InterPro" id="IPR012334">
    <property type="entry name" value="Pectin_lyas_fold"/>
</dbReference>
<dbReference type="InterPro" id="IPR011050">
    <property type="entry name" value="Pectin_lyase_fold/virulence"/>
</dbReference>
<dbReference type="InterPro" id="IPR045032">
    <property type="entry name" value="PEL"/>
</dbReference>
<dbReference type="PANTHER" id="PTHR31683:SF159">
    <property type="entry name" value="PECTATE LYASE"/>
    <property type="match status" value="1"/>
</dbReference>
<dbReference type="PANTHER" id="PTHR31683">
    <property type="entry name" value="PECTATE LYASE 18-RELATED"/>
    <property type="match status" value="1"/>
</dbReference>
<dbReference type="Pfam" id="PF00544">
    <property type="entry name" value="Pectate_lyase_4"/>
    <property type="match status" value="1"/>
</dbReference>
<dbReference type="PRINTS" id="PR00807">
    <property type="entry name" value="AMBALLERGEN"/>
</dbReference>
<dbReference type="SMART" id="SM00656">
    <property type="entry name" value="Amb_all"/>
    <property type="match status" value="1"/>
</dbReference>
<dbReference type="SUPFAM" id="SSF51126">
    <property type="entry name" value="Pectin lyase-like"/>
    <property type="match status" value="1"/>
</dbReference>
<protein>
    <recommendedName>
        <fullName>Pectate lyase 1</fullName>
        <ecNumber>4.2.2.2</ecNumber>
    </recommendedName>
    <alternativeName>
        <fullName>Antigen Amb a I</fullName>
    </alternativeName>
    <alternativeName>
        <fullName>Antigen E</fullName>
        <shortName>AgE</shortName>
    </alternativeName>
    <alternativeName>
        <fullName>Pollen allergen Amb a 1.2</fullName>
    </alternativeName>
    <alternativeName>
        <fullName>Protein AaBA</fullName>
    </alternativeName>
    <allergenName>Amb a 1.2</allergenName>
</protein>